<evidence type="ECO:0000255" key="1">
    <source>
        <dbReference type="HAMAP-Rule" id="MF_00071"/>
    </source>
</evidence>
<name>LEPA_CHLL3</name>
<comment type="function">
    <text evidence="1">Required for accurate and efficient protein synthesis under certain stress conditions. May act as a fidelity factor of the translation reaction, by catalyzing a one-codon backward translocation of tRNAs on improperly translocated ribosomes. Back-translocation proceeds from a post-translocation (POST) complex to a pre-translocation (PRE) complex, thus giving elongation factor G a second chance to translocate the tRNAs correctly. Binds to ribosomes in a GTP-dependent manner.</text>
</comment>
<comment type="catalytic activity">
    <reaction evidence="1">
        <text>GTP + H2O = GDP + phosphate + H(+)</text>
        <dbReference type="Rhea" id="RHEA:19669"/>
        <dbReference type="ChEBI" id="CHEBI:15377"/>
        <dbReference type="ChEBI" id="CHEBI:15378"/>
        <dbReference type="ChEBI" id="CHEBI:37565"/>
        <dbReference type="ChEBI" id="CHEBI:43474"/>
        <dbReference type="ChEBI" id="CHEBI:58189"/>
        <dbReference type="EC" id="3.6.5.n1"/>
    </reaction>
</comment>
<comment type="subcellular location">
    <subcellularLocation>
        <location evidence="1">Cell inner membrane</location>
        <topology evidence="1">Peripheral membrane protein</topology>
        <orientation evidence="1">Cytoplasmic side</orientation>
    </subcellularLocation>
</comment>
<comment type="similarity">
    <text evidence="1">Belongs to the TRAFAC class translation factor GTPase superfamily. Classic translation factor GTPase family. LepA subfamily.</text>
</comment>
<organism>
    <name type="scientific">Chlorobium luteolum (strain DSM 273 / BCRC 81028 / 2530)</name>
    <name type="common">Pelodictyon luteolum</name>
    <dbReference type="NCBI Taxonomy" id="319225"/>
    <lineage>
        <taxon>Bacteria</taxon>
        <taxon>Pseudomonadati</taxon>
        <taxon>Chlorobiota</taxon>
        <taxon>Chlorobiia</taxon>
        <taxon>Chlorobiales</taxon>
        <taxon>Chlorobiaceae</taxon>
        <taxon>Chlorobium/Pelodictyon group</taxon>
        <taxon>Pelodictyon</taxon>
    </lineage>
</organism>
<dbReference type="EC" id="3.6.5.n1" evidence="1"/>
<dbReference type="EMBL" id="CP000096">
    <property type="protein sequence ID" value="ABB24330.1"/>
    <property type="molecule type" value="Genomic_DNA"/>
</dbReference>
<dbReference type="RefSeq" id="WP_011358202.1">
    <property type="nucleotide sequence ID" value="NC_007512.1"/>
</dbReference>
<dbReference type="SMR" id="Q3B2V1"/>
<dbReference type="STRING" id="319225.Plut_1471"/>
<dbReference type="KEGG" id="plt:Plut_1471"/>
<dbReference type="eggNOG" id="COG0481">
    <property type="taxonomic scope" value="Bacteria"/>
</dbReference>
<dbReference type="HOGENOM" id="CLU_009995_3_3_10"/>
<dbReference type="OrthoDB" id="9801591at2"/>
<dbReference type="Proteomes" id="UP000002709">
    <property type="component" value="Chromosome"/>
</dbReference>
<dbReference type="GO" id="GO:0005886">
    <property type="term" value="C:plasma membrane"/>
    <property type="evidence" value="ECO:0007669"/>
    <property type="project" value="UniProtKB-SubCell"/>
</dbReference>
<dbReference type="GO" id="GO:0005525">
    <property type="term" value="F:GTP binding"/>
    <property type="evidence" value="ECO:0007669"/>
    <property type="project" value="UniProtKB-UniRule"/>
</dbReference>
<dbReference type="GO" id="GO:0003924">
    <property type="term" value="F:GTPase activity"/>
    <property type="evidence" value="ECO:0007669"/>
    <property type="project" value="UniProtKB-UniRule"/>
</dbReference>
<dbReference type="GO" id="GO:0043022">
    <property type="term" value="F:ribosome binding"/>
    <property type="evidence" value="ECO:0007669"/>
    <property type="project" value="UniProtKB-UniRule"/>
</dbReference>
<dbReference type="GO" id="GO:0003746">
    <property type="term" value="F:translation elongation factor activity"/>
    <property type="evidence" value="ECO:0007669"/>
    <property type="project" value="UniProtKB-UniRule"/>
</dbReference>
<dbReference type="GO" id="GO:0045727">
    <property type="term" value="P:positive regulation of translation"/>
    <property type="evidence" value="ECO:0007669"/>
    <property type="project" value="UniProtKB-UniRule"/>
</dbReference>
<dbReference type="CDD" id="cd03699">
    <property type="entry name" value="EF4_II"/>
    <property type="match status" value="1"/>
</dbReference>
<dbReference type="CDD" id="cd16260">
    <property type="entry name" value="EF4_III"/>
    <property type="match status" value="1"/>
</dbReference>
<dbReference type="CDD" id="cd01890">
    <property type="entry name" value="LepA"/>
    <property type="match status" value="1"/>
</dbReference>
<dbReference type="CDD" id="cd03709">
    <property type="entry name" value="lepA_C"/>
    <property type="match status" value="1"/>
</dbReference>
<dbReference type="FunFam" id="3.40.50.300:FF:000078">
    <property type="entry name" value="Elongation factor 4"/>
    <property type="match status" value="1"/>
</dbReference>
<dbReference type="FunFam" id="2.40.30.10:FF:000015">
    <property type="entry name" value="Translation factor GUF1, mitochondrial"/>
    <property type="match status" value="1"/>
</dbReference>
<dbReference type="FunFam" id="3.30.70.240:FF:000007">
    <property type="entry name" value="Translation factor GUF1, mitochondrial"/>
    <property type="match status" value="1"/>
</dbReference>
<dbReference type="FunFam" id="3.30.70.2570:FF:000001">
    <property type="entry name" value="Translation factor GUF1, mitochondrial"/>
    <property type="match status" value="1"/>
</dbReference>
<dbReference type="FunFam" id="3.30.70.870:FF:000004">
    <property type="entry name" value="Translation factor GUF1, mitochondrial"/>
    <property type="match status" value="1"/>
</dbReference>
<dbReference type="Gene3D" id="3.30.70.240">
    <property type="match status" value="1"/>
</dbReference>
<dbReference type="Gene3D" id="3.30.70.2570">
    <property type="entry name" value="Elongation factor 4, C-terminal domain"/>
    <property type="match status" value="1"/>
</dbReference>
<dbReference type="Gene3D" id="3.30.70.870">
    <property type="entry name" value="Elongation Factor G (Translational Gtpase), domain 3"/>
    <property type="match status" value="1"/>
</dbReference>
<dbReference type="Gene3D" id="3.40.50.300">
    <property type="entry name" value="P-loop containing nucleotide triphosphate hydrolases"/>
    <property type="match status" value="1"/>
</dbReference>
<dbReference type="Gene3D" id="2.40.30.10">
    <property type="entry name" value="Translation factors"/>
    <property type="match status" value="1"/>
</dbReference>
<dbReference type="HAMAP" id="MF_00071">
    <property type="entry name" value="LepA"/>
    <property type="match status" value="1"/>
</dbReference>
<dbReference type="InterPro" id="IPR006297">
    <property type="entry name" value="EF-4"/>
</dbReference>
<dbReference type="InterPro" id="IPR035647">
    <property type="entry name" value="EFG_III/V"/>
</dbReference>
<dbReference type="InterPro" id="IPR000640">
    <property type="entry name" value="EFG_V-like"/>
</dbReference>
<dbReference type="InterPro" id="IPR004161">
    <property type="entry name" value="EFTu-like_2"/>
</dbReference>
<dbReference type="InterPro" id="IPR038363">
    <property type="entry name" value="LepA_C_sf"/>
</dbReference>
<dbReference type="InterPro" id="IPR013842">
    <property type="entry name" value="LepA_CTD"/>
</dbReference>
<dbReference type="InterPro" id="IPR035654">
    <property type="entry name" value="LepA_IV"/>
</dbReference>
<dbReference type="InterPro" id="IPR027417">
    <property type="entry name" value="P-loop_NTPase"/>
</dbReference>
<dbReference type="InterPro" id="IPR005225">
    <property type="entry name" value="Small_GTP-bd"/>
</dbReference>
<dbReference type="InterPro" id="IPR000795">
    <property type="entry name" value="T_Tr_GTP-bd_dom"/>
</dbReference>
<dbReference type="NCBIfam" id="TIGR01393">
    <property type="entry name" value="lepA"/>
    <property type="match status" value="1"/>
</dbReference>
<dbReference type="NCBIfam" id="TIGR00231">
    <property type="entry name" value="small_GTP"/>
    <property type="match status" value="1"/>
</dbReference>
<dbReference type="PANTHER" id="PTHR43512:SF4">
    <property type="entry name" value="TRANSLATION FACTOR GUF1 HOMOLOG, CHLOROPLASTIC"/>
    <property type="match status" value="1"/>
</dbReference>
<dbReference type="PANTHER" id="PTHR43512">
    <property type="entry name" value="TRANSLATION FACTOR GUF1-RELATED"/>
    <property type="match status" value="1"/>
</dbReference>
<dbReference type="Pfam" id="PF00679">
    <property type="entry name" value="EFG_C"/>
    <property type="match status" value="1"/>
</dbReference>
<dbReference type="Pfam" id="PF00009">
    <property type="entry name" value="GTP_EFTU"/>
    <property type="match status" value="1"/>
</dbReference>
<dbReference type="Pfam" id="PF03144">
    <property type="entry name" value="GTP_EFTU_D2"/>
    <property type="match status" value="1"/>
</dbReference>
<dbReference type="Pfam" id="PF06421">
    <property type="entry name" value="LepA_C"/>
    <property type="match status" value="1"/>
</dbReference>
<dbReference type="PRINTS" id="PR00315">
    <property type="entry name" value="ELONGATNFCT"/>
</dbReference>
<dbReference type="SUPFAM" id="SSF54980">
    <property type="entry name" value="EF-G C-terminal domain-like"/>
    <property type="match status" value="2"/>
</dbReference>
<dbReference type="SUPFAM" id="SSF52540">
    <property type="entry name" value="P-loop containing nucleoside triphosphate hydrolases"/>
    <property type="match status" value="1"/>
</dbReference>
<dbReference type="PROSITE" id="PS51722">
    <property type="entry name" value="G_TR_2"/>
    <property type="match status" value="1"/>
</dbReference>
<feature type="chain" id="PRO_0000265683" description="Elongation factor 4">
    <location>
        <begin position="1"/>
        <end position="605"/>
    </location>
</feature>
<feature type="domain" description="tr-type G">
    <location>
        <begin position="9"/>
        <end position="192"/>
    </location>
</feature>
<feature type="binding site" evidence="1">
    <location>
        <begin position="21"/>
        <end position="26"/>
    </location>
    <ligand>
        <name>GTP</name>
        <dbReference type="ChEBI" id="CHEBI:37565"/>
    </ligand>
</feature>
<feature type="binding site" evidence="1">
    <location>
        <begin position="139"/>
        <end position="142"/>
    </location>
    <ligand>
        <name>GTP</name>
        <dbReference type="ChEBI" id="CHEBI:37565"/>
    </ligand>
</feature>
<reference key="1">
    <citation type="submission" date="2005-08" db="EMBL/GenBank/DDBJ databases">
        <title>Complete sequence of Pelodictyon luteolum DSM 273.</title>
        <authorList>
            <consortium name="US DOE Joint Genome Institute"/>
            <person name="Copeland A."/>
            <person name="Lucas S."/>
            <person name="Lapidus A."/>
            <person name="Barry K."/>
            <person name="Detter J.C."/>
            <person name="Glavina T."/>
            <person name="Hammon N."/>
            <person name="Israni S."/>
            <person name="Pitluck S."/>
            <person name="Bryant D."/>
            <person name="Schmutz J."/>
            <person name="Larimer F."/>
            <person name="Land M."/>
            <person name="Kyrpides N."/>
            <person name="Ivanova N."/>
            <person name="Richardson P."/>
        </authorList>
    </citation>
    <scope>NUCLEOTIDE SEQUENCE [LARGE SCALE GENOMIC DNA]</scope>
    <source>
        <strain>DSM 273 / BCRC 81028 / 2530</strain>
    </source>
</reference>
<protein>
    <recommendedName>
        <fullName evidence="1">Elongation factor 4</fullName>
        <shortName evidence="1">EF-4</shortName>
        <ecNumber evidence="1">3.6.5.n1</ecNumber>
    </recommendedName>
    <alternativeName>
        <fullName evidence="1">Ribosomal back-translocase LepA</fullName>
    </alternativeName>
</protein>
<sequence>MAPSSPEVSRIRNFCIIAHIDHGKSTLADRLLEMTHTLDRTQMDSAQVLDDMDLERERGITIKSHAVQMKYCSVAGDDYTLNLIDTPGHVDFSYEVSRSLAACEGALLVVDATQGVEAQTIANLYLAIEAGLEIIPVINKIDLPSSDVEGVARQIIDLIGIEREEILQVSAKAGLGVAELMEAIIARVPAPADNRKQPLRALIFDSVFDPYRGAVVYLRIVDGVLRRGEKVRFFANDKIFLADEIGTMALKRQPKEVLEAGDVGYLICSIKDVKDAKVGDTVTHAEVPAEKRLAGYKDVKPMVFSGLYPVNSNEFEDLRESLEKLSLNDASLVYTPETSVALGFGFRCGFLGLLHMEIIQERLEREYDMNIITTVPNVEYRVIMTNGETVIVDNPSKMPDTTRIAHVEEPYVSMQIITLADYIGNIMKLGMERRGEYRNTDYLDTQRVNMHFEFPLAEIVFDFHDRLKSISKGYASMDYEYIGYRESDLVKLDVLLNAEPVDALSIIVHRSKAYDWGRKLCGKLKGIIPKQMYEVAIQAAIGSRIISRETISAMRKNVLAKCYGGDISRKRKLLEKQKEGKKRMKQVGRVEVPQEAFLAILNIDE</sequence>
<keyword id="KW-0997">Cell inner membrane</keyword>
<keyword id="KW-1003">Cell membrane</keyword>
<keyword id="KW-0342">GTP-binding</keyword>
<keyword id="KW-0378">Hydrolase</keyword>
<keyword id="KW-0472">Membrane</keyword>
<keyword id="KW-0547">Nucleotide-binding</keyword>
<keyword id="KW-0648">Protein biosynthesis</keyword>
<keyword id="KW-1185">Reference proteome</keyword>
<gene>
    <name evidence="1" type="primary">lepA</name>
    <name type="ordered locus">Plut_1471</name>
</gene>
<accession>Q3B2V1</accession>
<proteinExistence type="inferred from homology"/>